<sequence length="315" mass="36024">MSQPTPAVRTFQDLILALQNYWAAQGCVVLQPYDMEVGAGTFHTATFLRAVGPETWNAAYVQPSRRPADGRYGENPNRLQHYYQFQVVLKPNPANFQELYLGSLKAIGLDPLVHDIRFVEDNWESPTLGAWGLGWEIWLNGMEVTQFTYFQQVGGIECYPVTGEITYGLERLAMYIQGVDSVYDLVWADGPFGKVTYGDVFHQNEVEQSTYNFEHANVEKLFELFDFYESEANRLIKLDLPLPTYEMVLKASHTFNLLDARRAISVTERQRYILRVRTLARDVAQSYLQARARLGFPMATPELRDEVLAKLEAAQ</sequence>
<protein>
    <recommendedName>
        <fullName evidence="1">Glycine--tRNA ligase alpha subunit</fullName>
        <ecNumber evidence="1">6.1.1.14</ecNumber>
    </recommendedName>
    <alternativeName>
        <fullName evidence="1">Glycyl-tRNA synthetase alpha subunit</fullName>
        <shortName evidence="1">GlyRS</shortName>
    </alternativeName>
</protein>
<proteinExistence type="inferred from homology"/>
<comment type="catalytic activity">
    <reaction evidence="1">
        <text>tRNA(Gly) + glycine + ATP = glycyl-tRNA(Gly) + AMP + diphosphate</text>
        <dbReference type="Rhea" id="RHEA:16013"/>
        <dbReference type="Rhea" id="RHEA-COMP:9664"/>
        <dbReference type="Rhea" id="RHEA-COMP:9683"/>
        <dbReference type="ChEBI" id="CHEBI:30616"/>
        <dbReference type="ChEBI" id="CHEBI:33019"/>
        <dbReference type="ChEBI" id="CHEBI:57305"/>
        <dbReference type="ChEBI" id="CHEBI:78442"/>
        <dbReference type="ChEBI" id="CHEBI:78522"/>
        <dbReference type="ChEBI" id="CHEBI:456215"/>
        <dbReference type="EC" id="6.1.1.14"/>
    </reaction>
</comment>
<comment type="subunit">
    <text evidence="1">Tetramer of two alpha and two beta subunits.</text>
</comment>
<comment type="subcellular location">
    <subcellularLocation>
        <location evidence="1">Cytoplasm</location>
    </subcellularLocation>
</comment>
<comment type="similarity">
    <text evidence="1">Belongs to the class-II aminoacyl-tRNA synthetase family.</text>
</comment>
<reference key="1">
    <citation type="submission" date="2008-02" db="EMBL/GenBank/DDBJ databases">
        <title>Complete sequence of Pseudomonas putida W619.</title>
        <authorList>
            <person name="Copeland A."/>
            <person name="Lucas S."/>
            <person name="Lapidus A."/>
            <person name="Barry K."/>
            <person name="Detter J.C."/>
            <person name="Glavina del Rio T."/>
            <person name="Dalin E."/>
            <person name="Tice H."/>
            <person name="Pitluck S."/>
            <person name="Chain P."/>
            <person name="Malfatti S."/>
            <person name="Shin M."/>
            <person name="Vergez L."/>
            <person name="Schmutz J."/>
            <person name="Larimer F."/>
            <person name="Land M."/>
            <person name="Hauser L."/>
            <person name="Kyrpides N."/>
            <person name="Kim E."/>
            <person name="Taghavi S."/>
            <person name="Vangronsveld D."/>
            <person name="van der Lelie D."/>
            <person name="Richardson P."/>
        </authorList>
    </citation>
    <scope>NUCLEOTIDE SEQUENCE [LARGE SCALE GENOMIC DNA]</scope>
    <source>
        <strain>W619</strain>
    </source>
</reference>
<name>SYGA_PSEPW</name>
<organism>
    <name type="scientific">Pseudomonas putida (strain W619)</name>
    <dbReference type="NCBI Taxonomy" id="390235"/>
    <lineage>
        <taxon>Bacteria</taxon>
        <taxon>Pseudomonadati</taxon>
        <taxon>Pseudomonadota</taxon>
        <taxon>Gammaproteobacteria</taxon>
        <taxon>Pseudomonadales</taxon>
        <taxon>Pseudomonadaceae</taxon>
        <taxon>Pseudomonas</taxon>
    </lineage>
</organism>
<dbReference type="EC" id="6.1.1.14" evidence="1"/>
<dbReference type="EMBL" id="CP000949">
    <property type="protein sequence ID" value="ACA70586.1"/>
    <property type="molecule type" value="Genomic_DNA"/>
</dbReference>
<dbReference type="SMR" id="B1J426"/>
<dbReference type="STRING" id="390235.PputW619_0080"/>
<dbReference type="KEGG" id="ppw:PputW619_0080"/>
<dbReference type="eggNOG" id="COG0752">
    <property type="taxonomic scope" value="Bacteria"/>
</dbReference>
<dbReference type="HOGENOM" id="CLU_057066_1_0_6"/>
<dbReference type="OrthoDB" id="9802183at2"/>
<dbReference type="GO" id="GO:0005829">
    <property type="term" value="C:cytosol"/>
    <property type="evidence" value="ECO:0007669"/>
    <property type="project" value="TreeGrafter"/>
</dbReference>
<dbReference type="GO" id="GO:0005524">
    <property type="term" value="F:ATP binding"/>
    <property type="evidence" value="ECO:0007669"/>
    <property type="project" value="UniProtKB-UniRule"/>
</dbReference>
<dbReference type="GO" id="GO:0004820">
    <property type="term" value="F:glycine-tRNA ligase activity"/>
    <property type="evidence" value="ECO:0007669"/>
    <property type="project" value="UniProtKB-UniRule"/>
</dbReference>
<dbReference type="GO" id="GO:0006426">
    <property type="term" value="P:glycyl-tRNA aminoacylation"/>
    <property type="evidence" value="ECO:0007669"/>
    <property type="project" value="UniProtKB-UniRule"/>
</dbReference>
<dbReference type="CDD" id="cd00733">
    <property type="entry name" value="GlyRS_alpha_core"/>
    <property type="match status" value="1"/>
</dbReference>
<dbReference type="FunFam" id="3.30.930.10:FF:000006">
    <property type="entry name" value="Glycine--tRNA ligase alpha subunit"/>
    <property type="match status" value="1"/>
</dbReference>
<dbReference type="Gene3D" id="3.30.930.10">
    <property type="entry name" value="Bira Bifunctional Protein, Domain 2"/>
    <property type="match status" value="1"/>
</dbReference>
<dbReference type="Gene3D" id="1.20.58.180">
    <property type="entry name" value="Class II aaRS and biotin synthetases, domain 2"/>
    <property type="match status" value="1"/>
</dbReference>
<dbReference type="HAMAP" id="MF_00254">
    <property type="entry name" value="Gly_tRNA_synth_alpha"/>
    <property type="match status" value="1"/>
</dbReference>
<dbReference type="InterPro" id="IPR045864">
    <property type="entry name" value="aa-tRNA-synth_II/BPL/LPL"/>
</dbReference>
<dbReference type="InterPro" id="IPR006194">
    <property type="entry name" value="Gly-tRNA-synth_heterodimer"/>
</dbReference>
<dbReference type="InterPro" id="IPR002310">
    <property type="entry name" value="Gly-tRNA_ligase_asu"/>
</dbReference>
<dbReference type="NCBIfam" id="TIGR00388">
    <property type="entry name" value="glyQ"/>
    <property type="match status" value="1"/>
</dbReference>
<dbReference type="NCBIfam" id="NF006827">
    <property type="entry name" value="PRK09348.1"/>
    <property type="match status" value="1"/>
</dbReference>
<dbReference type="PANTHER" id="PTHR30075:SF2">
    <property type="entry name" value="GLYCINE--TRNA LIGASE, CHLOROPLASTIC_MITOCHONDRIAL 2"/>
    <property type="match status" value="1"/>
</dbReference>
<dbReference type="PANTHER" id="PTHR30075">
    <property type="entry name" value="GLYCYL-TRNA SYNTHETASE"/>
    <property type="match status" value="1"/>
</dbReference>
<dbReference type="Pfam" id="PF02091">
    <property type="entry name" value="tRNA-synt_2e"/>
    <property type="match status" value="1"/>
</dbReference>
<dbReference type="PRINTS" id="PR01044">
    <property type="entry name" value="TRNASYNTHGA"/>
</dbReference>
<dbReference type="SUPFAM" id="SSF55681">
    <property type="entry name" value="Class II aaRS and biotin synthetases"/>
    <property type="match status" value="1"/>
</dbReference>
<dbReference type="PROSITE" id="PS50861">
    <property type="entry name" value="AA_TRNA_LIGASE_II_GLYAB"/>
    <property type="match status" value="1"/>
</dbReference>
<accession>B1J426</accession>
<feature type="chain" id="PRO_1000101217" description="Glycine--tRNA ligase alpha subunit">
    <location>
        <begin position="1"/>
        <end position="315"/>
    </location>
</feature>
<gene>
    <name evidence="1" type="primary">glyQ</name>
    <name type="ordered locus">PputW619_0080</name>
</gene>
<evidence type="ECO:0000255" key="1">
    <source>
        <dbReference type="HAMAP-Rule" id="MF_00254"/>
    </source>
</evidence>
<keyword id="KW-0030">Aminoacyl-tRNA synthetase</keyword>
<keyword id="KW-0067">ATP-binding</keyword>
<keyword id="KW-0963">Cytoplasm</keyword>
<keyword id="KW-0436">Ligase</keyword>
<keyword id="KW-0547">Nucleotide-binding</keyword>
<keyword id="KW-0648">Protein biosynthesis</keyword>